<organism>
    <name type="scientific">Salmonella choleraesuis (strain SC-B67)</name>
    <dbReference type="NCBI Taxonomy" id="321314"/>
    <lineage>
        <taxon>Bacteria</taxon>
        <taxon>Pseudomonadati</taxon>
        <taxon>Pseudomonadota</taxon>
        <taxon>Gammaproteobacteria</taxon>
        <taxon>Enterobacterales</taxon>
        <taxon>Enterobacteriaceae</taxon>
        <taxon>Salmonella</taxon>
    </lineage>
</organism>
<evidence type="ECO:0000255" key="1">
    <source>
        <dbReference type="HAMAP-Rule" id="MF_01325"/>
    </source>
</evidence>
<evidence type="ECO:0000305" key="2"/>
<name>RL3_SALCH</name>
<gene>
    <name evidence="1" type="primary">rplC</name>
    <name type="ordered locus">SCH_3374</name>
</gene>
<accession>Q57J32</accession>
<feature type="chain" id="PRO_0000241407" description="Large ribosomal subunit protein uL3">
    <location>
        <begin position="1"/>
        <end position="209"/>
    </location>
</feature>
<feature type="modified residue" description="N5-methylglutamine" evidence="1">
    <location>
        <position position="150"/>
    </location>
</feature>
<protein>
    <recommendedName>
        <fullName evidence="1">Large ribosomal subunit protein uL3</fullName>
    </recommendedName>
    <alternativeName>
        <fullName evidence="2">50S ribosomal protein L3</fullName>
    </alternativeName>
</protein>
<sequence>MIGLVGKKVGMTRIFTEDGVSIPVTVIEVEANRVTQVKDLANDGYRAVQVTTGAKKANRVTKPEAGHFAKAGVEAGRGLWEFRLAEGEEYTVGQSISVELFADVKKVDVTGTSKGKGFAGTVKRWNFRTQDATHGNSLSHRVPGSIGQNQTPGKVFKGKKMAGQMGNERVTVQSLDVVRVDAERNLLLVKGGVPGATGCDLIVKPAVKA</sequence>
<dbReference type="EMBL" id="AE017220">
    <property type="protein sequence ID" value="AAX67280.1"/>
    <property type="molecule type" value="Genomic_DNA"/>
</dbReference>
<dbReference type="RefSeq" id="WP_000579838.1">
    <property type="nucleotide sequence ID" value="NC_006905.1"/>
</dbReference>
<dbReference type="SMR" id="Q57J32"/>
<dbReference type="KEGG" id="sec:SCH_3374"/>
<dbReference type="HOGENOM" id="CLU_044142_4_1_6"/>
<dbReference type="Proteomes" id="UP000000538">
    <property type="component" value="Chromosome"/>
</dbReference>
<dbReference type="GO" id="GO:0022625">
    <property type="term" value="C:cytosolic large ribosomal subunit"/>
    <property type="evidence" value="ECO:0007669"/>
    <property type="project" value="TreeGrafter"/>
</dbReference>
<dbReference type="GO" id="GO:0019843">
    <property type="term" value="F:rRNA binding"/>
    <property type="evidence" value="ECO:0007669"/>
    <property type="project" value="UniProtKB-UniRule"/>
</dbReference>
<dbReference type="GO" id="GO:0003735">
    <property type="term" value="F:structural constituent of ribosome"/>
    <property type="evidence" value="ECO:0007669"/>
    <property type="project" value="InterPro"/>
</dbReference>
<dbReference type="GO" id="GO:0006412">
    <property type="term" value="P:translation"/>
    <property type="evidence" value="ECO:0007669"/>
    <property type="project" value="UniProtKB-UniRule"/>
</dbReference>
<dbReference type="FunFam" id="2.40.30.10:FF:000004">
    <property type="entry name" value="50S ribosomal protein L3"/>
    <property type="match status" value="1"/>
</dbReference>
<dbReference type="FunFam" id="3.30.160.810:FF:000001">
    <property type="entry name" value="50S ribosomal protein L3"/>
    <property type="match status" value="1"/>
</dbReference>
<dbReference type="Gene3D" id="3.30.160.810">
    <property type="match status" value="1"/>
</dbReference>
<dbReference type="Gene3D" id="2.40.30.10">
    <property type="entry name" value="Translation factors"/>
    <property type="match status" value="1"/>
</dbReference>
<dbReference type="HAMAP" id="MF_01325_B">
    <property type="entry name" value="Ribosomal_uL3_B"/>
    <property type="match status" value="1"/>
</dbReference>
<dbReference type="InterPro" id="IPR000597">
    <property type="entry name" value="Ribosomal_uL3"/>
</dbReference>
<dbReference type="InterPro" id="IPR019927">
    <property type="entry name" value="Ribosomal_uL3_bac/org-type"/>
</dbReference>
<dbReference type="InterPro" id="IPR019926">
    <property type="entry name" value="Ribosomal_uL3_CS"/>
</dbReference>
<dbReference type="InterPro" id="IPR009000">
    <property type="entry name" value="Transl_B-barrel_sf"/>
</dbReference>
<dbReference type="NCBIfam" id="TIGR03625">
    <property type="entry name" value="L3_bact"/>
    <property type="match status" value="1"/>
</dbReference>
<dbReference type="PANTHER" id="PTHR11229">
    <property type="entry name" value="50S RIBOSOMAL PROTEIN L3"/>
    <property type="match status" value="1"/>
</dbReference>
<dbReference type="PANTHER" id="PTHR11229:SF16">
    <property type="entry name" value="LARGE RIBOSOMAL SUBUNIT PROTEIN UL3C"/>
    <property type="match status" value="1"/>
</dbReference>
<dbReference type="Pfam" id="PF00297">
    <property type="entry name" value="Ribosomal_L3"/>
    <property type="match status" value="1"/>
</dbReference>
<dbReference type="SUPFAM" id="SSF50447">
    <property type="entry name" value="Translation proteins"/>
    <property type="match status" value="1"/>
</dbReference>
<dbReference type="PROSITE" id="PS00474">
    <property type="entry name" value="RIBOSOMAL_L3"/>
    <property type="match status" value="1"/>
</dbReference>
<keyword id="KW-0488">Methylation</keyword>
<keyword id="KW-0687">Ribonucleoprotein</keyword>
<keyword id="KW-0689">Ribosomal protein</keyword>
<keyword id="KW-0694">RNA-binding</keyword>
<keyword id="KW-0699">rRNA-binding</keyword>
<comment type="function">
    <text evidence="1">One of the primary rRNA binding proteins, it binds directly near the 3'-end of the 23S rRNA, where it nucleates assembly of the 50S subunit.</text>
</comment>
<comment type="subunit">
    <text evidence="1">Part of the 50S ribosomal subunit. Forms a cluster with proteins L14 and L19.</text>
</comment>
<comment type="PTM">
    <text evidence="1">Methylated by PrmB.</text>
</comment>
<comment type="similarity">
    <text evidence="1">Belongs to the universal ribosomal protein uL3 family.</text>
</comment>
<proteinExistence type="inferred from homology"/>
<reference key="1">
    <citation type="journal article" date="2005" name="Nucleic Acids Res.">
        <title>The genome sequence of Salmonella enterica serovar Choleraesuis, a highly invasive and resistant zoonotic pathogen.</title>
        <authorList>
            <person name="Chiu C.-H."/>
            <person name="Tang P."/>
            <person name="Chu C."/>
            <person name="Hu S."/>
            <person name="Bao Q."/>
            <person name="Yu J."/>
            <person name="Chou Y.-Y."/>
            <person name="Wang H.-S."/>
            <person name="Lee Y.-S."/>
        </authorList>
    </citation>
    <scope>NUCLEOTIDE SEQUENCE [LARGE SCALE GENOMIC DNA]</scope>
    <source>
        <strain>SC-B67</strain>
    </source>
</reference>